<dbReference type="EMBL" id="AY346104">
    <property type="protein sequence ID" value="AAQ24209.1"/>
    <property type="molecule type" value="mRNA"/>
</dbReference>
<dbReference type="RefSeq" id="NP_954519.1">
    <property type="nucleotide sequence ID" value="NM_199088.1"/>
</dbReference>
<dbReference type="SMR" id="P60531"/>
<dbReference type="FunCoup" id="P60531">
    <property type="interactions" value="12"/>
</dbReference>
<dbReference type="STRING" id="10116.ENSRNOP00000043218"/>
<dbReference type="GlyGen" id="P60531">
    <property type="glycosylation" value="1 site"/>
</dbReference>
<dbReference type="iPTMnet" id="P60531"/>
<dbReference type="PhosphoSitePlus" id="P60531"/>
<dbReference type="PaxDb" id="10116-ENSRNOP00000043218"/>
<dbReference type="Ensembl" id="ENSRNOT00000049584.4">
    <property type="protein sequence ID" value="ENSRNOP00000043218.4"/>
    <property type="gene ID" value="ENSRNOG00000020443.7"/>
</dbReference>
<dbReference type="GeneID" id="292890"/>
<dbReference type="KEGG" id="rno:292890"/>
<dbReference type="UCSC" id="RGD:727784">
    <property type="organism name" value="rat"/>
</dbReference>
<dbReference type="AGR" id="RGD:727784"/>
<dbReference type="CTD" id="60385"/>
<dbReference type="RGD" id="727784">
    <property type="gene designation" value="Tsks"/>
</dbReference>
<dbReference type="eggNOG" id="ENOG502RT0F">
    <property type="taxonomic scope" value="Eukaryota"/>
</dbReference>
<dbReference type="GeneTree" id="ENSGT00390000002611"/>
<dbReference type="HOGENOM" id="CLU_033722_0_0_1"/>
<dbReference type="InParanoid" id="P60531"/>
<dbReference type="OMA" id="ENCWMVT"/>
<dbReference type="OrthoDB" id="9424665at2759"/>
<dbReference type="PhylomeDB" id="P60531"/>
<dbReference type="TreeFam" id="TF337594"/>
<dbReference type="PRO" id="PR:P60531"/>
<dbReference type="Proteomes" id="UP000002494">
    <property type="component" value="Chromosome 1"/>
</dbReference>
<dbReference type="GO" id="GO:0005814">
    <property type="term" value="C:centriole"/>
    <property type="evidence" value="ECO:0000266"/>
    <property type="project" value="RGD"/>
</dbReference>
<dbReference type="GO" id="GO:0005737">
    <property type="term" value="C:cytoplasm"/>
    <property type="evidence" value="ECO:0007669"/>
    <property type="project" value="UniProtKB-KW"/>
</dbReference>
<dbReference type="GO" id="GO:0019901">
    <property type="term" value="F:protein kinase binding"/>
    <property type="evidence" value="ECO:0000266"/>
    <property type="project" value="RGD"/>
</dbReference>
<dbReference type="InterPro" id="IPR028214">
    <property type="entry name" value="TSKS"/>
</dbReference>
<dbReference type="PANTHER" id="PTHR14351">
    <property type="entry name" value="TESTIS-SPECIFIC SERINE KINASE SUBSTRATE"/>
    <property type="match status" value="1"/>
</dbReference>
<dbReference type="PANTHER" id="PTHR14351:SF1">
    <property type="entry name" value="TESTIS-SPECIFIC SERINE KINASE SUBSTRATE"/>
    <property type="match status" value="1"/>
</dbReference>
<dbReference type="Pfam" id="PF15358">
    <property type="entry name" value="TSKS"/>
    <property type="match status" value="1"/>
</dbReference>
<organism>
    <name type="scientific">Rattus norvegicus</name>
    <name type="common">Rat</name>
    <dbReference type="NCBI Taxonomy" id="10116"/>
    <lineage>
        <taxon>Eukaryota</taxon>
        <taxon>Metazoa</taxon>
        <taxon>Chordata</taxon>
        <taxon>Craniata</taxon>
        <taxon>Vertebrata</taxon>
        <taxon>Euteleostomi</taxon>
        <taxon>Mammalia</taxon>
        <taxon>Eutheria</taxon>
        <taxon>Euarchontoglires</taxon>
        <taxon>Glires</taxon>
        <taxon>Rodentia</taxon>
        <taxon>Myomorpha</taxon>
        <taxon>Muroidea</taxon>
        <taxon>Muridae</taxon>
        <taxon>Murinae</taxon>
        <taxon>Rattus</taxon>
    </lineage>
</organism>
<protein>
    <recommendedName>
        <fullName>Testis-specific serine kinase substrate</fullName>
        <shortName>Testis-specific kinase substrate</shortName>
    </recommendedName>
    <alternativeName>
        <fullName>STK22 substrate 1</fullName>
    </alternativeName>
</protein>
<feature type="chain" id="PRO_0000065667" description="Testis-specific serine kinase substrate">
    <location>
        <begin position="1"/>
        <end position="585"/>
    </location>
</feature>
<feature type="region of interest" description="Disordered" evidence="2">
    <location>
        <begin position="91"/>
        <end position="126"/>
    </location>
</feature>
<feature type="region of interest" description="Disordered" evidence="2">
    <location>
        <begin position="262"/>
        <end position="309"/>
    </location>
</feature>
<feature type="region of interest" description="Disordered" evidence="2">
    <location>
        <begin position="559"/>
        <end position="585"/>
    </location>
</feature>
<feature type="compositionally biased region" description="Low complexity" evidence="2">
    <location>
        <begin position="91"/>
        <end position="108"/>
    </location>
</feature>
<feature type="modified residue" description="Phosphoserine" evidence="3">
    <location>
        <position position="224"/>
    </location>
</feature>
<feature type="modified residue" description="Phosphoserine" evidence="3">
    <location>
        <position position="281"/>
    </location>
</feature>
<feature type="modified residue" description="Phosphoserine" evidence="3">
    <location>
        <position position="309"/>
    </location>
</feature>
<comment type="function">
    <text>May play a role in testicular physiology, most probably in the process of spermatogenesis or spermatid development.</text>
</comment>
<comment type="subcellular location">
    <subcellularLocation>
        <location evidence="1">Cytoplasm</location>
        <location evidence="1">Cytoskeleton</location>
        <location evidence="1">Microtubule organizing center</location>
        <location evidence="1">Centrosome</location>
        <location evidence="1">Centriole</location>
    </subcellularLocation>
    <text evidence="1">Concentrates in spermatid centrioles during flagellogenesis.</text>
</comment>
<comment type="PTM">
    <text evidence="1">Phosphorylated on serine residue(s) by STK22A/TSSK1 and STK22B/TSSK2.</text>
</comment>
<evidence type="ECO:0000250" key="1"/>
<evidence type="ECO:0000256" key="2">
    <source>
        <dbReference type="SAM" id="MobiDB-lite"/>
    </source>
</evidence>
<evidence type="ECO:0007744" key="3">
    <source>
    </source>
</evidence>
<name>TSKS_RAT</name>
<accession>P60531</accession>
<reference key="1">
    <citation type="submission" date="2003-07" db="EMBL/GenBank/DDBJ databases">
        <title>Cloning of three Rattus norvegicus testis specific serine kinases.</title>
        <authorList>
            <person name="Zhou G."/>
            <person name="Zhang Y."/>
            <person name="Zhang Z."/>
        </authorList>
    </citation>
    <scope>NUCLEOTIDE SEQUENCE [MRNA]</scope>
    <source>
        <strain>Sprague-Dawley</strain>
    </source>
</reference>
<reference key="2">
    <citation type="journal article" date="2012" name="Nat. Commun.">
        <title>Quantitative maps of protein phosphorylation sites across 14 different rat organs and tissues.</title>
        <authorList>
            <person name="Lundby A."/>
            <person name="Secher A."/>
            <person name="Lage K."/>
            <person name="Nordsborg N.B."/>
            <person name="Dmytriyev A."/>
            <person name="Lundby C."/>
            <person name="Olsen J.V."/>
        </authorList>
    </citation>
    <scope>PHOSPHORYLATION [LARGE SCALE ANALYSIS] AT SER-224; SER-281 AND SER-309</scope>
    <scope>IDENTIFICATION BY MASS SPECTROMETRY [LARGE SCALE ANALYSIS]</scope>
</reference>
<keyword id="KW-0963">Cytoplasm</keyword>
<keyword id="KW-0206">Cytoskeleton</keyword>
<keyword id="KW-0597">Phosphoprotein</keyword>
<keyword id="KW-1185">Reference proteome</keyword>
<sequence>MASVVVKTIWQSKEIHEAGDPPAGVESRAQLVPEAPGGVTSPAKGITKKKKAVSFHGVEPRMSHEPMHWCLNLKRSSACTNVSLLNLAAMEPDSSGTDSTTEDSGPLALPGPPASPTTPWAPEDPDITELLSGVNSGLVRAKDSITSLKEKTTRVNQHVQTLQSECSVLSENLERRRQEAEELEGYCSQLKGPRPDVLTQENCRKVTRSVEDAEIKTNVLKQNSALLEEKLRYLQQQLQDETPRRQEAELQELEQKLEAGLSRHGLGPTTPIQGCSGPPGSPEEPPRPRGLPSNGWGMAIRAGEGPSLSEQELQKVSSGLEELRREVSSLAARWHQEEGAVQEALRLLGGLGGRLDGFLGQWERAQREQAQSARGLQELRGRADELCTMVERSAVSVASLRSELEALGPVKPILEELGRQLQNSRRGPDHVLNLDRPAQGPCPRCASQGQQLSTESLQQLLERALTPLVDEVKQKGLAPACPSCQRLHKKILELERQALAKHVRAEALSSTLRLAQDEAVRAKNLLLTDKMKPEEKVATLDYMHLKMCSLHDQLSHLPLEGSTGAMGGGSTGGAPPKRGGPGSEQ</sequence>
<gene>
    <name type="primary">Tsks</name>
    <name type="synonym">Stk22s1</name>
</gene>
<proteinExistence type="evidence at protein level"/>